<reference evidence="3" key="1">
    <citation type="journal article" date="2005" name="Science">
        <title>The transcriptional landscape of the mammalian genome.</title>
        <authorList>
            <person name="Carninci P."/>
            <person name="Kasukawa T."/>
            <person name="Katayama S."/>
            <person name="Gough J."/>
            <person name="Frith M.C."/>
            <person name="Maeda N."/>
            <person name="Oyama R."/>
            <person name="Ravasi T."/>
            <person name="Lenhard B."/>
            <person name="Wells C."/>
            <person name="Kodzius R."/>
            <person name="Shimokawa K."/>
            <person name="Bajic V.B."/>
            <person name="Brenner S.E."/>
            <person name="Batalov S."/>
            <person name="Forrest A.R."/>
            <person name="Zavolan M."/>
            <person name="Davis M.J."/>
            <person name="Wilming L.G."/>
            <person name="Aidinis V."/>
            <person name="Allen J.E."/>
            <person name="Ambesi-Impiombato A."/>
            <person name="Apweiler R."/>
            <person name="Aturaliya R.N."/>
            <person name="Bailey T.L."/>
            <person name="Bansal M."/>
            <person name="Baxter L."/>
            <person name="Beisel K.W."/>
            <person name="Bersano T."/>
            <person name="Bono H."/>
            <person name="Chalk A.M."/>
            <person name="Chiu K.P."/>
            <person name="Choudhary V."/>
            <person name="Christoffels A."/>
            <person name="Clutterbuck D.R."/>
            <person name="Crowe M.L."/>
            <person name="Dalla E."/>
            <person name="Dalrymple B.P."/>
            <person name="de Bono B."/>
            <person name="Della Gatta G."/>
            <person name="di Bernardo D."/>
            <person name="Down T."/>
            <person name="Engstrom P."/>
            <person name="Fagiolini M."/>
            <person name="Faulkner G."/>
            <person name="Fletcher C.F."/>
            <person name="Fukushima T."/>
            <person name="Furuno M."/>
            <person name="Futaki S."/>
            <person name="Gariboldi M."/>
            <person name="Georgii-Hemming P."/>
            <person name="Gingeras T.R."/>
            <person name="Gojobori T."/>
            <person name="Green R.E."/>
            <person name="Gustincich S."/>
            <person name="Harbers M."/>
            <person name="Hayashi Y."/>
            <person name="Hensch T.K."/>
            <person name="Hirokawa N."/>
            <person name="Hill D."/>
            <person name="Huminiecki L."/>
            <person name="Iacono M."/>
            <person name="Ikeo K."/>
            <person name="Iwama A."/>
            <person name="Ishikawa T."/>
            <person name="Jakt M."/>
            <person name="Kanapin A."/>
            <person name="Katoh M."/>
            <person name="Kawasawa Y."/>
            <person name="Kelso J."/>
            <person name="Kitamura H."/>
            <person name="Kitano H."/>
            <person name="Kollias G."/>
            <person name="Krishnan S.P."/>
            <person name="Kruger A."/>
            <person name="Kummerfeld S.K."/>
            <person name="Kurochkin I.V."/>
            <person name="Lareau L.F."/>
            <person name="Lazarevic D."/>
            <person name="Lipovich L."/>
            <person name="Liu J."/>
            <person name="Liuni S."/>
            <person name="McWilliam S."/>
            <person name="Madan Babu M."/>
            <person name="Madera M."/>
            <person name="Marchionni L."/>
            <person name="Matsuda H."/>
            <person name="Matsuzawa S."/>
            <person name="Miki H."/>
            <person name="Mignone F."/>
            <person name="Miyake S."/>
            <person name="Morris K."/>
            <person name="Mottagui-Tabar S."/>
            <person name="Mulder N."/>
            <person name="Nakano N."/>
            <person name="Nakauchi H."/>
            <person name="Ng P."/>
            <person name="Nilsson R."/>
            <person name="Nishiguchi S."/>
            <person name="Nishikawa S."/>
            <person name="Nori F."/>
            <person name="Ohara O."/>
            <person name="Okazaki Y."/>
            <person name="Orlando V."/>
            <person name="Pang K.C."/>
            <person name="Pavan W.J."/>
            <person name="Pavesi G."/>
            <person name="Pesole G."/>
            <person name="Petrovsky N."/>
            <person name="Piazza S."/>
            <person name="Reed J."/>
            <person name="Reid J.F."/>
            <person name="Ring B.Z."/>
            <person name="Ringwald M."/>
            <person name="Rost B."/>
            <person name="Ruan Y."/>
            <person name="Salzberg S.L."/>
            <person name="Sandelin A."/>
            <person name="Schneider C."/>
            <person name="Schoenbach C."/>
            <person name="Sekiguchi K."/>
            <person name="Semple C.A."/>
            <person name="Seno S."/>
            <person name="Sessa L."/>
            <person name="Sheng Y."/>
            <person name="Shibata Y."/>
            <person name="Shimada H."/>
            <person name="Shimada K."/>
            <person name="Silva D."/>
            <person name="Sinclair B."/>
            <person name="Sperling S."/>
            <person name="Stupka E."/>
            <person name="Sugiura K."/>
            <person name="Sultana R."/>
            <person name="Takenaka Y."/>
            <person name="Taki K."/>
            <person name="Tammoja K."/>
            <person name="Tan S.L."/>
            <person name="Tang S."/>
            <person name="Taylor M.S."/>
            <person name="Tegner J."/>
            <person name="Teichmann S.A."/>
            <person name="Ueda H.R."/>
            <person name="van Nimwegen E."/>
            <person name="Verardo R."/>
            <person name="Wei C.L."/>
            <person name="Yagi K."/>
            <person name="Yamanishi H."/>
            <person name="Zabarovsky E."/>
            <person name="Zhu S."/>
            <person name="Zimmer A."/>
            <person name="Hide W."/>
            <person name="Bult C."/>
            <person name="Grimmond S.M."/>
            <person name="Teasdale R.D."/>
            <person name="Liu E.T."/>
            <person name="Brusic V."/>
            <person name="Quackenbush J."/>
            <person name="Wahlestedt C."/>
            <person name="Mattick J.S."/>
            <person name="Hume D.A."/>
            <person name="Kai C."/>
            <person name="Sasaki D."/>
            <person name="Tomaru Y."/>
            <person name="Fukuda S."/>
            <person name="Kanamori-Katayama M."/>
            <person name="Suzuki M."/>
            <person name="Aoki J."/>
            <person name="Arakawa T."/>
            <person name="Iida J."/>
            <person name="Imamura K."/>
            <person name="Itoh M."/>
            <person name="Kato T."/>
            <person name="Kawaji H."/>
            <person name="Kawagashira N."/>
            <person name="Kawashima T."/>
            <person name="Kojima M."/>
            <person name="Kondo S."/>
            <person name="Konno H."/>
            <person name="Nakano K."/>
            <person name="Ninomiya N."/>
            <person name="Nishio T."/>
            <person name="Okada M."/>
            <person name="Plessy C."/>
            <person name="Shibata K."/>
            <person name="Shiraki T."/>
            <person name="Suzuki S."/>
            <person name="Tagami M."/>
            <person name="Waki K."/>
            <person name="Watahiki A."/>
            <person name="Okamura-Oho Y."/>
            <person name="Suzuki H."/>
            <person name="Kawai J."/>
            <person name="Hayashizaki Y."/>
        </authorList>
    </citation>
    <scope>NUCLEOTIDE SEQUENCE [LARGE SCALE MRNA]</scope>
</reference>
<reference key="2">
    <citation type="journal article" date="2004" name="Genome Res.">
        <title>The status, quality, and expansion of the NIH full-length cDNA project: the Mammalian Gene Collection (MGC).</title>
        <authorList>
            <consortium name="The MGC Project Team"/>
        </authorList>
    </citation>
    <scope>NUCLEOTIDE SEQUENCE [LARGE SCALE MRNA]</scope>
</reference>
<reference key="3">
    <citation type="journal article" date="2010" name="Cell">
        <title>A tissue-specific atlas of mouse protein phosphorylation and expression.</title>
        <authorList>
            <person name="Huttlin E.L."/>
            <person name="Jedrychowski M.P."/>
            <person name="Elias J.E."/>
            <person name="Goswami T."/>
            <person name="Rad R."/>
            <person name="Beausoleil S.A."/>
            <person name="Villen J."/>
            <person name="Haas W."/>
            <person name="Sowa M.E."/>
            <person name="Gygi S.P."/>
        </authorList>
    </citation>
    <scope>IDENTIFICATION BY MASS SPECTROMETRY [LARGE SCALE ANALYSIS]</scope>
    <source>
        <tissue>Kidney</tissue>
        <tissue>Lung</tissue>
        <tissue>Spleen</tissue>
        <tissue>Testis</tissue>
    </source>
</reference>
<comment type="function">
    <text evidence="1">Non-catalytic component of the RNA exosome complex which has 3'-&gt;5' exoribonuclease activity and participates in a multitude of cellular RNA processing and degradation events. In the nucleus, the RNA exosome complex is involved in proper maturation of stable RNA species such as rRNA, snRNA and snoRNA, in the elimination of RNA processing by-products and non-coding 'pervasive' transcripts, such as antisense RNA species and promoter-upstream transcripts (PROMPTs), and of mRNAs with processing defects, thereby limiting or excluding their export to the cytoplasm. The RNA exosome may be involved in Ig class switch recombination (CSR) and/or Ig variable region somatic hypermutation (SHM) by targeting AICDA deamination activity to transcribed dsDNA substrates. In the cytoplasm, the RNA exosome complex is involved in general mRNA turnover and specifically degrades inherently unstable mRNAs containing AU-rich elements (AREs) within their 3' untranslated regions, and in RNA surveillance pathways, preventing translation of aberrant mRNAs. It seems to be involved in degradation of histone mRNA. The catalytic inactive RNA exosome core complex of 9 subunits (Exo-9) is proposed to play a pivotal role in the binding and presentation of RNA for ribonucleolysis, and to serve as a scaffold for the association with catalytic subunits and accessory proteins or complexes. EXOSC4 binds to ARE-containing RNAs (By similarity).</text>
</comment>
<comment type="subunit">
    <text evidence="1">Component of the RNA exosome core complex (Exo-9), composed of EXOSC1, EXOSC2, EXOSC3, EXOSC4, EXOSC5, EXOSC6, EXOSC7, EXOSC8 and EXOSC9; within the complex interacts with EXOSC2, EXOSC7 and EXOSC9 (By similarity). The catalytically inactive RNA exosome core complex (Exo-9) associates with the catalytic subunit EXOSC10/RRP6 (By similarity). Exo-9 may associate with DIS3 to form the nucleolar exosome complex, or DIS3L to form the cytoplasmic exosome complex (By similarity). Exo-9 is formed by a hexameric base ring consisting of the heterodimers EXOSC4-EXOSC9, EXOSC5-EXOSC8 and EXOSC6-EXOSC7, and a cap ring consisting of EXOSC1, EXOSC2 and EXOSC3 (By similarity). The RNA exosome complex associates with cofactors C1D/RRP47, MPHOSPH6/MPP6 and MTREX/MTR4 (By similarity). Interacts with DDX60 (By similarity). Interacts with DIS3; the interaction is direct (By similarity).</text>
</comment>
<comment type="subcellular location">
    <subcellularLocation>
        <location evidence="1">Cytoplasm</location>
    </subcellularLocation>
    <subcellularLocation>
        <location evidence="1">Nucleus</location>
        <location evidence="1">Nucleolus</location>
    </subcellularLocation>
    <subcellularLocation>
        <location evidence="1">Nucleus</location>
    </subcellularLocation>
    <subcellularLocation>
        <location evidence="1">Nucleus</location>
        <location evidence="1">Nucleoplasm</location>
    </subcellularLocation>
</comment>
<comment type="similarity">
    <text evidence="2">Belongs to the RNase PH family.</text>
</comment>
<name>EXOS4_MOUSE</name>
<evidence type="ECO:0000250" key="1">
    <source>
        <dbReference type="UniProtKB" id="Q9NPD3"/>
    </source>
</evidence>
<evidence type="ECO:0000305" key="2"/>
<evidence type="ECO:0000312" key="3">
    <source>
        <dbReference type="EMBL" id="BAC40987.1"/>
    </source>
</evidence>
<organism>
    <name type="scientific">Mus musculus</name>
    <name type="common">Mouse</name>
    <dbReference type="NCBI Taxonomy" id="10090"/>
    <lineage>
        <taxon>Eukaryota</taxon>
        <taxon>Metazoa</taxon>
        <taxon>Chordata</taxon>
        <taxon>Craniata</taxon>
        <taxon>Vertebrata</taxon>
        <taxon>Euteleostomi</taxon>
        <taxon>Mammalia</taxon>
        <taxon>Eutheria</taxon>
        <taxon>Euarchontoglires</taxon>
        <taxon>Glires</taxon>
        <taxon>Rodentia</taxon>
        <taxon>Myomorpha</taxon>
        <taxon>Muroidea</taxon>
        <taxon>Muridae</taxon>
        <taxon>Murinae</taxon>
        <taxon>Mus</taxon>
        <taxon>Mus</taxon>
    </lineage>
</organism>
<dbReference type="EMBL" id="AK089890">
    <property type="protein sequence ID" value="BAC40987.1"/>
    <property type="molecule type" value="mRNA"/>
</dbReference>
<dbReference type="EMBL" id="AK167629">
    <property type="protein sequence ID" value="BAE39680.1"/>
    <property type="molecule type" value="mRNA"/>
</dbReference>
<dbReference type="EMBL" id="AK144062">
    <property type="protein sequence ID" value="BAE25679.1"/>
    <property type="molecule type" value="mRNA"/>
</dbReference>
<dbReference type="EMBL" id="BC012277">
    <property type="protein sequence ID" value="AAH12277.1"/>
    <property type="molecule type" value="mRNA"/>
</dbReference>
<dbReference type="CCDS" id="CCDS37119.1"/>
<dbReference type="RefSeq" id="NP_780608.1">
    <property type="nucleotide sequence ID" value="NM_175399.4"/>
</dbReference>
<dbReference type="SMR" id="Q921I9"/>
<dbReference type="BioGRID" id="224543">
    <property type="interactions" value="10"/>
</dbReference>
<dbReference type="ComplexPortal" id="CPX-594">
    <property type="entry name" value="Nuclear exosome complex, Dis3-Exosc10 variant"/>
</dbReference>
<dbReference type="ComplexPortal" id="CPX-595">
    <property type="entry name" value="Nucleolar exosome complex, Exosc10 variant"/>
</dbReference>
<dbReference type="ComplexPortal" id="CPX-596">
    <property type="entry name" value="Cytoplasmic exosome complex, Dis3l variant"/>
</dbReference>
<dbReference type="ComplexPortal" id="CPX-598">
    <property type="entry name" value="Exosome complex, Dis3 variant"/>
</dbReference>
<dbReference type="ComplexPortal" id="CPX-601">
    <property type="entry name" value="Cytoplasmic exosome complex, Dis3l-Exosc10 variant"/>
</dbReference>
<dbReference type="FunCoup" id="Q921I9">
    <property type="interactions" value="2697"/>
</dbReference>
<dbReference type="IntAct" id="Q921I9">
    <property type="interactions" value="1"/>
</dbReference>
<dbReference type="STRING" id="10090.ENSMUSP00000050940"/>
<dbReference type="PhosphoSitePlus" id="Q921I9"/>
<dbReference type="PaxDb" id="10090-ENSMUSP00000050940"/>
<dbReference type="ProteomicsDB" id="267674"/>
<dbReference type="Pumba" id="Q921I9"/>
<dbReference type="Antibodypedia" id="14755">
    <property type="antibodies" value="178 antibodies from 26 providers"/>
</dbReference>
<dbReference type="DNASU" id="109075"/>
<dbReference type="Ensembl" id="ENSMUST00000059045.8">
    <property type="protein sequence ID" value="ENSMUSP00000050940.8"/>
    <property type="gene ID" value="ENSMUSG00000034259.9"/>
</dbReference>
<dbReference type="GeneID" id="109075"/>
<dbReference type="KEGG" id="mmu:109075"/>
<dbReference type="UCSC" id="uc007wjp.1">
    <property type="organism name" value="mouse"/>
</dbReference>
<dbReference type="AGR" id="MGI:1923576"/>
<dbReference type="CTD" id="54512"/>
<dbReference type="MGI" id="MGI:1923576">
    <property type="gene designation" value="Exosc4"/>
</dbReference>
<dbReference type="VEuPathDB" id="HostDB:ENSMUSG00000034259"/>
<dbReference type="eggNOG" id="KOG1068">
    <property type="taxonomic scope" value="Eukaryota"/>
</dbReference>
<dbReference type="GeneTree" id="ENSGT00940000153348"/>
<dbReference type="HOGENOM" id="CLU_063514_0_0_1"/>
<dbReference type="InParanoid" id="Q921I9"/>
<dbReference type="OMA" id="ECRINTH"/>
<dbReference type="OrthoDB" id="27298at2759"/>
<dbReference type="PhylomeDB" id="Q921I9"/>
<dbReference type="TreeFam" id="TF313915"/>
<dbReference type="Reactome" id="R-MMU-429958">
    <property type="pathway name" value="mRNA decay by 3' to 5' exoribonuclease"/>
</dbReference>
<dbReference type="Reactome" id="R-MMU-450385">
    <property type="pathway name" value="Butyrate Response Factor 1 (BRF1) binds and destabilizes mRNA"/>
</dbReference>
<dbReference type="Reactome" id="R-MMU-450513">
    <property type="pathway name" value="Tristetraprolin (TTP, ZFP36) binds and destabilizes mRNA"/>
</dbReference>
<dbReference type="Reactome" id="R-MMU-450604">
    <property type="pathway name" value="KSRP (KHSRP) binds and destabilizes mRNA"/>
</dbReference>
<dbReference type="Reactome" id="R-MMU-6791226">
    <property type="pathway name" value="Major pathway of rRNA processing in the nucleolus and cytosol"/>
</dbReference>
<dbReference type="BioGRID-ORCS" id="109075">
    <property type="hits" value="26 hits in 80 CRISPR screens"/>
</dbReference>
<dbReference type="ChiTaRS" id="Exosc4">
    <property type="organism name" value="mouse"/>
</dbReference>
<dbReference type="PRO" id="PR:Q921I9"/>
<dbReference type="Proteomes" id="UP000000589">
    <property type="component" value="Chromosome 15"/>
</dbReference>
<dbReference type="RNAct" id="Q921I9">
    <property type="molecule type" value="protein"/>
</dbReference>
<dbReference type="Bgee" id="ENSMUSG00000034259">
    <property type="expression patterns" value="Expressed in floor plate of midbrain and 248 other cell types or tissues"/>
</dbReference>
<dbReference type="ExpressionAtlas" id="Q921I9">
    <property type="expression patterns" value="baseline and differential"/>
</dbReference>
<dbReference type="GO" id="GO:0000177">
    <property type="term" value="C:cytoplasmic exosome (RNase complex)"/>
    <property type="evidence" value="ECO:0000303"/>
    <property type="project" value="ComplexPortal"/>
</dbReference>
<dbReference type="GO" id="GO:0005829">
    <property type="term" value="C:cytosol"/>
    <property type="evidence" value="ECO:0000266"/>
    <property type="project" value="ComplexPortal"/>
</dbReference>
<dbReference type="GO" id="GO:0000791">
    <property type="term" value="C:euchromatin"/>
    <property type="evidence" value="ECO:0007669"/>
    <property type="project" value="Ensembl"/>
</dbReference>
<dbReference type="GO" id="GO:0000178">
    <property type="term" value="C:exosome (RNase complex)"/>
    <property type="evidence" value="ECO:0000250"/>
    <property type="project" value="UniProtKB"/>
</dbReference>
<dbReference type="GO" id="GO:0000176">
    <property type="term" value="C:nuclear exosome (RNase complex)"/>
    <property type="evidence" value="ECO:0000303"/>
    <property type="project" value="ComplexPortal"/>
</dbReference>
<dbReference type="GO" id="GO:0101019">
    <property type="term" value="C:nucleolar exosome (RNase complex)"/>
    <property type="evidence" value="ECO:0000303"/>
    <property type="project" value="ComplexPortal"/>
</dbReference>
<dbReference type="GO" id="GO:0005730">
    <property type="term" value="C:nucleolus"/>
    <property type="evidence" value="ECO:0000266"/>
    <property type="project" value="ComplexPortal"/>
</dbReference>
<dbReference type="GO" id="GO:0005654">
    <property type="term" value="C:nucleoplasm"/>
    <property type="evidence" value="ECO:0007669"/>
    <property type="project" value="UniProtKB-SubCell"/>
</dbReference>
<dbReference type="GO" id="GO:0005634">
    <property type="term" value="C:nucleus"/>
    <property type="evidence" value="ECO:0000266"/>
    <property type="project" value="ComplexPortal"/>
</dbReference>
<dbReference type="GO" id="GO:0035925">
    <property type="term" value="F:mRNA 3'-UTR AU-rich region binding"/>
    <property type="evidence" value="ECO:0007669"/>
    <property type="project" value="Ensembl"/>
</dbReference>
<dbReference type="GO" id="GO:0051607">
    <property type="term" value="P:defense response to virus"/>
    <property type="evidence" value="ECO:0000266"/>
    <property type="project" value="MGI"/>
</dbReference>
<dbReference type="GO" id="GO:0045006">
    <property type="term" value="P:DNA deamination"/>
    <property type="evidence" value="ECO:0007669"/>
    <property type="project" value="Ensembl"/>
</dbReference>
<dbReference type="GO" id="GO:0071044">
    <property type="term" value="P:histone mRNA catabolic process"/>
    <property type="evidence" value="ECO:0000250"/>
    <property type="project" value="UniProtKB"/>
</dbReference>
<dbReference type="GO" id="GO:0000460">
    <property type="term" value="P:maturation of 5.8S rRNA"/>
    <property type="evidence" value="ECO:0007669"/>
    <property type="project" value="Ensembl"/>
</dbReference>
<dbReference type="GO" id="GO:0071028">
    <property type="term" value="P:nuclear mRNA surveillance"/>
    <property type="evidence" value="ECO:0007669"/>
    <property type="project" value="Ensembl"/>
</dbReference>
<dbReference type="GO" id="GO:0030307">
    <property type="term" value="P:positive regulation of cell growth"/>
    <property type="evidence" value="ECO:0007669"/>
    <property type="project" value="Ensembl"/>
</dbReference>
<dbReference type="GO" id="GO:0006401">
    <property type="term" value="P:RNA catabolic process"/>
    <property type="evidence" value="ECO:0000266"/>
    <property type="project" value="ComplexPortal"/>
</dbReference>
<dbReference type="GO" id="GO:0006396">
    <property type="term" value="P:RNA processing"/>
    <property type="evidence" value="ECO:0000266"/>
    <property type="project" value="ComplexPortal"/>
</dbReference>
<dbReference type="CDD" id="cd11370">
    <property type="entry name" value="RNase_PH_RRP41"/>
    <property type="match status" value="1"/>
</dbReference>
<dbReference type="FunFam" id="3.30.230.70:FF:000010">
    <property type="entry name" value="Exosome complex component RRP41"/>
    <property type="match status" value="1"/>
</dbReference>
<dbReference type="Gene3D" id="3.30.230.70">
    <property type="entry name" value="GHMP Kinase, N-terminal domain"/>
    <property type="match status" value="1"/>
</dbReference>
<dbReference type="InterPro" id="IPR001247">
    <property type="entry name" value="ExoRNase_PH_dom1"/>
</dbReference>
<dbReference type="InterPro" id="IPR015847">
    <property type="entry name" value="ExoRNase_PH_dom2"/>
</dbReference>
<dbReference type="InterPro" id="IPR036345">
    <property type="entry name" value="ExoRNase_PH_dom2_sf"/>
</dbReference>
<dbReference type="InterPro" id="IPR027408">
    <property type="entry name" value="PNPase/RNase_PH_dom_sf"/>
</dbReference>
<dbReference type="InterPro" id="IPR020568">
    <property type="entry name" value="Ribosomal_Su5_D2-typ_SF"/>
</dbReference>
<dbReference type="InterPro" id="IPR050080">
    <property type="entry name" value="RNase_PH"/>
</dbReference>
<dbReference type="PANTHER" id="PTHR11953">
    <property type="entry name" value="EXOSOME COMPLEX COMPONENT"/>
    <property type="match status" value="1"/>
</dbReference>
<dbReference type="PANTHER" id="PTHR11953:SF0">
    <property type="entry name" value="EXOSOME COMPLEX COMPONENT RRP41"/>
    <property type="match status" value="1"/>
</dbReference>
<dbReference type="Pfam" id="PF01138">
    <property type="entry name" value="RNase_PH"/>
    <property type="match status" value="1"/>
</dbReference>
<dbReference type="Pfam" id="PF03725">
    <property type="entry name" value="RNase_PH_C"/>
    <property type="match status" value="1"/>
</dbReference>
<dbReference type="SUPFAM" id="SSF55666">
    <property type="entry name" value="Ribonuclease PH domain 2-like"/>
    <property type="match status" value="1"/>
</dbReference>
<dbReference type="SUPFAM" id="SSF54211">
    <property type="entry name" value="Ribosomal protein S5 domain 2-like"/>
    <property type="match status" value="1"/>
</dbReference>
<accession>Q921I9</accession>
<accession>Q542B0</accession>
<keyword id="KW-0007">Acetylation</keyword>
<keyword id="KW-0963">Cytoplasm</keyword>
<keyword id="KW-0271">Exosome</keyword>
<keyword id="KW-0539">Nucleus</keyword>
<keyword id="KW-1185">Reference proteome</keyword>
<keyword id="KW-0694">RNA-binding</keyword>
<keyword id="KW-0698">rRNA processing</keyword>
<feature type="initiator methionine" description="Removed" evidence="1">
    <location>
        <position position="1"/>
    </location>
</feature>
<feature type="chain" id="PRO_0000139959" description="Exosome complex component RRP41">
    <location>
        <begin position="2"/>
        <end position="245"/>
    </location>
</feature>
<feature type="modified residue" description="N-acetylalanine" evidence="1">
    <location>
        <position position="2"/>
    </location>
</feature>
<sequence>MAGLELLSDQGYRIDGRRAGELRKIQARMGVFAQADGSAYIEQGNTKALAVVYGPHEIRGSRSRALPDRALVNCQYSSATFSTGERKRRPHGDRKSCEMGLQLRQTFEAAILTQLHPRSQIDIYVQVLQADGGTYAACVNAATLAVMDAGIPMRDFVCACSAGFVDGTALADLSHVEEAAGGPQLALALLPASGQIALLEMDSRLHEDHLEQVLEAAAQAARGVHTLLDLVVRQHVQEASVSLGD</sequence>
<protein>
    <recommendedName>
        <fullName>Exosome complex component RRP41</fullName>
    </recommendedName>
    <alternativeName>
        <fullName>Exosome component 4</fullName>
    </alternativeName>
    <alternativeName>
        <fullName>Ribosomal RNA-processing protein 41</fullName>
    </alternativeName>
</protein>
<proteinExistence type="evidence at protein level"/>
<gene>
    <name type="primary">Exosc4</name>
    <name type="synonym">Rrp41</name>
</gene>